<accession>A4FXX9</accession>
<feature type="chain" id="PRO_1000015995" description="Aspartyl/glutamyl-tRNA(Asn/Gln) amidotransferase subunit B">
    <location>
        <begin position="1"/>
        <end position="469"/>
    </location>
</feature>
<organism>
    <name type="scientific">Methanococcus maripaludis (strain C5 / ATCC BAA-1333)</name>
    <dbReference type="NCBI Taxonomy" id="402880"/>
    <lineage>
        <taxon>Archaea</taxon>
        <taxon>Methanobacteriati</taxon>
        <taxon>Methanobacteriota</taxon>
        <taxon>Methanomada group</taxon>
        <taxon>Methanococci</taxon>
        <taxon>Methanococcales</taxon>
        <taxon>Methanococcaceae</taxon>
        <taxon>Methanococcus</taxon>
    </lineage>
</organism>
<protein>
    <recommendedName>
        <fullName evidence="1">Aspartyl/glutamyl-tRNA(Asn/Gln) amidotransferase subunit B</fullName>
        <shortName evidence="1">Asp/Glu-ADT subunit B</shortName>
        <ecNumber evidence="1">6.3.5.-</ecNumber>
    </recommendedName>
</protein>
<name>GATB_METM5</name>
<evidence type="ECO:0000255" key="1">
    <source>
        <dbReference type="HAMAP-Rule" id="MF_00121"/>
    </source>
</evidence>
<dbReference type="EC" id="6.3.5.-" evidence="1"/>
<dbReference type="EMBL" id="CP000609">
    <property type="protein sequence ID" value="ABO35063.1"/>
    <property type="molecule type" value="Genomic_DNA"/>
</dbReference>
<dbReference type="RefSeq" id="WP_011868517.1">
    <property type="nucleotide sequence ID" value="NC_009135.1"/>
</dbReference>
<dbReference type="SMR" id="A4FXX9"/>
<dbReference type="STRING" id="402880.MmarC5_0753"/>
<dbReference type="GeneID" id="4929000"/>
<dbReference type="KEGG" id="mmq:MmarC5_0753"/>
<dbReference type="eggNOG" id="arCOG01718">
    <property type="taxonomic scope" value="Archaea"/>
</dbReference>
<dbReference type="HOGENOM" id="CLU_019240_0_0_2"/>
<dbReference type="OrthoDB" id="52755at2157"/>
<dbReference type="Proteomes" id="UP000000253">
    <property type="component" value="Chromosome"/>
</dbReference>
<dbReference type="GO" id="GO:0050566">
    <property type="term" value="F:asparaginyl-tRNA synthase (glutamine-hydrolyzing) activity"/>
    <property type="evidence" value="ECO:0007669"/>
    <property type="project" value="RHEA"/>
</dbReference>
<dbReference type="GO" id="GO:0005524">
    <property type="term" value="F:ATP binding"/>
    <property type="evidence" value="ECO:0007669"/>
    <property type="project" value="UniProtKB-KW"/>
</dbReference>
<dbReference type="GO" id="GO:0050567">
    <property type="term" value="F:glutaminyl-tRNA synthase (glutamine-hydrolyzing) activity"/>
    <property type="evidence" value="ECO:0007669"/>
    <property type="project" value="UniProtKB-UniRule"/>
</dbReference>
<dbReference type="GO" id="GO:0070681">
    <property type="term" value="P:glutaminyl-tRNAGln biosynthesis via transamidation"/>
    <property type="evidence" value="ECO:0007669"/>
    <property type="project" value="TreeGrafter"/>
</dbReference>
<dbReference type="GO" id="GO:0006412">
    <property type="term" value="P:translation"/>
    <property type="evidence" value="ECO:0007669"/>
    <property type="project" value="UniProtKB-UniRule"/>
</dbReference>
<dbReference type="FunFam" id="1.10.10.410:FF:000001">
    <property type="entry name" value="Aspartyl/glutamyl-tRNA(Asn/Gln) amidotransferase subunit B"/>
    <property type="match status" value="1"/>
</dbReference>
<dbReference type="Gene3D" id="1.10.10.410">
    <property type="match status" value="1"/>
</dbReference>
<dbReference type="Gene3D" id="1.10.150.380">
    <property type="entry name" value="GatB domain, N-terminal subdomain"/>
    <property type="match status" value="1"/>
</dbReference>
<dbReference type="HAMAP" id="MF_00121">
    <property type="entry name" value="GatB"/>
    <property type="match status" value="1"/>
</dbReference>
<dbReference type="InterPro" id="IPR017959">
    <property type="entry name" value="Asn/Gln-tRNA_amidoTrfase_suB/E"/>
</dbReference>
<dbReference type="InterPro" id="IPR006075">
    <property type="entry name" value="Asn/Gln-tRNA_Trfase_suB/E_cat"/>
</dbReference>
<dbReference type="InterPro" id="IPR018027">
    <property type="entry name" value="Asn/Gln_amidotransferase"/>
</dbReference>
<dbReference type="InterPro" id="IPR003789">
    <property type="entry name" value="Asn/Gln_tRNA_amidoTrase-B-like"/>
</dbReference>
<dbReference type="InterPro" id="IPR004413">
    <property type="entry name" value="GatB"/>
</dbReference>
<dbReference type="InterPro" id="IPR042114">
    <property type="entry name" value="GatB_C_1"/>
</dbReference>
<dbReference type="InterPro" id="IPR023168">
    <property type="entry name" value="GatB_Yqey_C_2"/>
</dbReference>
<dbReference type="InterPro" id="IPR017958">
    <property type="entry name" value="Gln-tRNA_amidoTrfase_suB_CS"/>
</dbReference>
<dbReference type="InterPro" id="IPR014746">
    <property type="entry name" value="Gln_synth/guanido_kin_cat_dom"/>
</dbReference>
<dbReference type="NCBIfam" id="TIGR00133">
    <property type="entry name" value="gatB"/>
    <property type="match status" value="1"/>
</dbReference>
<dbReference type="NCBIfam" id="NF004012">
    <property type="entry name" value="PRK05477.1-2"/>
    <property type="match status" value="1"/>
</dbReference>
<dbReference type="NCBIfam" id="NF004014">
    <property type="entry name" value="PRK05477.1-4"/>
    <property type="match status" value="1"/>
</dbReference>
<dbReference type="PANTHER" id="PTHR11659">
    <property type="entry name" value="GLUTAMYL-TRNA GLN AMIDOTRANSFERASE SUBUNIT B MITOCHONDRIAL AND PROKARYOTIC PET112-RELATED"/>
    <property type="match status" value="1"/>
</dbReference>
<dbReference type="PANTHER" id="PTHR11659:SF0">
    <property type="entry name" value="GLUTAMYL-TRNA(GLN) AMIDOTRANSFERASE SUBUNIT B, MITOCHONDRIAL"/>
    <property type="match status" value="1"/>
</dbReference>
<dbReference type="Pfam" id="PF02934">
    <property type="entry name" value="GatB_N"/>
    <property type="match status" value="1"/>
</dbReference>
<dbReference type="Pfam" id="PF02637">
    <property type="entry name" value="GatB_Yqey"/>
    <property type="match status" value="1"/>
</dbReference>
<dbReference type="SMART" id="SM00845">
    <property type="entry name" value="GatB_Yqey"/>
    <property type="match status" value="1"/>
</dbReference>
<dbReference type="SUPFAM" id="SSF89095">
    <property type="entry name" value="GatB/YqeY motif"/>
    <property type="match status" value="1"/>
</dbReference>
<dbReference type="SUPFAM" id="SSF55931">
    <property type="entry name" value="Glutamine synthetase/guanido kinase"/>
    <property type="match status" value="1"/>
</dbReference>
<dbReference type="PROSITE" id="PS01234">
    <property type="entry name" value="GATB"/>
    <property type="match status" value="1"/>
</dbReference>
<keyword id="KW-0067">ATP-binding</keyword>
<keyword id="KW-0436">Ligase</keyword>
<keyword id="KW-0547">Nucleotide-binding</keyword>
<keyword id="KW-0648">Protein biosynthesis</keyword>
<reference key="1">
    <citation type="submission" date="2007-03" db="EMBL/GenBank/DDBJ databases">
        <title>Complete sequence of chromosome of Methanococcus maripaludis C5.</title>
        <authorList>
            <consortium name="US DOE Joint Genome Institute"/>
            <person name="Copeland A."/>
            <person name="Lucas S."/>
            <person name="Lapidus A."/>
            <person name="Barry K."/>
            <person name="Glavina del Rio T."/>
            <person name="Dalin E."/>
            <person name="Tice H."/>
            <person name="Pitluck S."/>
            <person name="Chertkov O."/>
            <person name="Brettin T."/>
            <person name="Bruce D."/>
            <person name="Han C."/>
            <person name="Detter J.C."/>
            <person name="Schmutz J."/>
            <person name="Larimer F."/>
            <person name="Land M."/>
            <person name="Hauser L."/>
            <person name="Kyrpides N."/>
            <person name="Mikhailova N."/>
            <person name="Sieprawska-Lupa M."/>
            <person name="Whitman W.B."/>
            <person name="Richardson P."/>
        </authorList>
    </citation>
    <scope>NUCLEOTIDE SEQUENCE [LARGE SCALE GENOMIC DNA]</scope>
    <source>
        <strain>C5 / ATCC BAA-1333</strain>
    </source>
</reference>
<proteinExistence type="inferred from homology"/>
<comment type="function">
    <text evidence="1">Allows the formation of correctly charged Asn-tRNA(Asn) or Gln-tRNA(Gln) through the transamidation of misacylated Asp-tRNA(Asn) or Glu-tRNA(Gln) in organisms which lack either or both of asparaginyl-tRNA or glutaminyl-tRNA synthetases. The reaction takes place in the presence of glutamine and ATP through an activated phospho-Asp-tRNA(Asn) or phospho-Glu-tRNA(Gln).</text>
</comment>
<comment type="catalytic activity">
    <reaction evidence="1">
        <text>L-glutamyl-tRNA(Gln) + L-glutamine + ATP + H2O = L-glutaminyl-tRNA(Gln) + L-glutamate + ADP + phosphate + H(+)</text>
        <dbReference type="Rhea" id="RHEA:17521"/>
        <dbReference type="Rhea" id="RHEA-COMP:9681"/>
        <dbReference type="Rhea" id="RHEA-COMP:9684"/>
        <dbReference type="ChEBI" id="CHEBI:15377"/>
        <dbReference type="ChEBI" id="CHEBI:15378"/>
        <dbReference type="ChEBI" id="CHEBI:29985"/>
        <dbReference type="ChEBI" id="CHEBI:30616"/>
        <dbReference type="ChEBI" id="CHEBI:43474"/>
        <dbReference type="ChEBI" id="CHEBI:58359"/>
        <dbReference type="ChEBI" id="CHEBI:78520"/>
        <dbReference type="ChEBI" id="CHEBI:78521"/>
        <dbReference type="ChEBI" id="CHEBI:456216"/>
    </reaction>
</comment>
<comment type="catalytic activity">
    <reaction evidence="1">
        <text>L-aspartyl-tRNA(Asn) + L-glutamine + ATP + H2O = L-asparaginyl-tRNA(Asn) + L-glutamate + ADP + phosphate + 2 H(+)</text>
        <dbReference type="Rhea" id="RHEA:14513"/>
        <dbReference type="Rhea" id="RHEA-COMP:9674"/>
        <dbReference type="Rhea" id="RHEA-COMP:9677"/>
        <dbReference type="ChEBI" id="CHEBI:15377"/>
        <dbReference type="ChEBI" id="CHEBI:15378"/>
        <dbReference type="ChEBI" id="CHEBI:29985"/>
        <dbReference type="ChEBI" id="CHEBI:30616"/>
        <dbReference type="ChEBI" id="CHEBI:43474"/>
        <dbReference type="ChEBI" id="CHEBI:58359"/>
        <dbReference type="ChEBI" id="CHEBI:78515"/>
        <dbReference type="ChEBI" id="CHEBI:78516"/>
        <dbReference type="ChEBI" id="CHEBI:456216"/>
    </reaction>
</comment>
<comment type="subunit">
    <text evidence="1">Heterotrimer of A, B and C subunits.</text>
</comment>
<comment type="similarity">
    <text evidence="1">Belongs to the GatB/GatE family. GatB subfamily.</text>
</comment>
<sequence>MSEDLSMKCGLEIHVQVDTNSKLFCQCPTNYKDVEPNTNICPVCIGHPGAKPMPPNKKAIDMAIMVAKMLGCEMVIDKDIYFQRKHYNYPDLPSGYQKTSVPIGEHGKFLGVGITEVHLEEDPGQYKPDLGTVDYNRSGTPLIEIVTDPDMKSPEEAREFLRQLLRLFRYIGNLRGEGTMRADTNISIKYNGIQGNRVEVKNVNSIRGVYKVLKYELIRQKNVLRRGGEIKLETRAFMESQMITKGMRSKETADDYRYIPDPDLQPIVLNNEWVEKVEAQMPETPMNKEKRFVEQYGIKEDDAKVLVSDLELADVFEKVVAELGNDKDGISLAVTWIRNELKRVLVYNKLEFFETNLRPEHMVELINSIKDKTISQKIGKTIIEQMVEHKGEKTPKELINEMGLTVIEDTSELEKACEEAIKNSEKAIEDYKSGNQRALNSVVGQVMKLTRGRAEPATVVEILKKKIDG</sequence>
<gene>
    <name evidence="1" type="primary">gatB</name>
    <name type="ordered locus">MmarC5_0753</name>
</gene>